<feature type="signal peptide" evidence="2">
    <location>
        <begin position="1"/>
        <end position="19"/>
    </location>
</feature>
<feature type="chain" id="PRO_0000403103" description="L-type lectin-domain containing receptor kinase IX.1">
    <location>
        <begin position="20"/>
        <end position="651"/>
    </location>
</feature>
<feature type="topological domain" description="Extracellular" evidence="2">
    <location>
        <begin position="20"/>
        <end position="269"/>
    </location>
</feature>
<feature type="transmembrane region" description="Helical" evidence="2">
    <location>
        <begin position="270"/>
        <end position="290"/>
    </location>
</feature>
<feature type="topological domain" description="Cytoplasmic" evidence="2">
    <location>
        <begin position="291"/>
        <end position="651"/>
    </location>
</feature>
<feature type="domain" description="Protein kinase" evidence="3">
    <location>
        <begin position="335"/>
        <end position="616"/>
    </location>
</feature>
<feature type="region of interest" description="Legume-lectin like" evidence="8">
    <location>
        <begin position="20"/>
        <end position="251"/>
    </location>
</feature>
<feature type="region of interest" description="Disordered" evidence="4">
    <location>
        <begin position="630"/>
        <end position="651"/>
    </location>
</feature>
<feature type="active site" description="Proton acceptor" evidence="3">
    <location>
        <position position="459"/>
    </location>
</feature>
<feature type="binding site" evidence="3">
    <location>
        <begin position="341"/>
        <end position="349"/>
    </location>
    <ligand>
        <name>ATP</name>
        <dbReference type="ChEBI" id="CHEBI:30616"/>
    </ligand>
</feature>
<feature type="binding site" evidence="3">
    <location>
        <position position="364"/>
    </location>
    <ligand>
        <name>ATP</name>
        <dbReference type="ChEBI" id="CHEBI:30616"/>
    </ligand>
</feature>
<feature type="glycosylation site" description="N-linked (GlcNAc...) asparagine" evidence="2">
    <location>
        <position position="23"/>
    </location>
</feature>
<feature type="glycosylation site" description="N-linked (GlcNAc...) asparagine" evidence="2">
    <location>
        <position position="125"/>
    </location>
</feature>
<feature type="glycosylation site" description="N-linked (GlcNAc...) asparagine" evidence="2">
    <location>
        <position position="129"/>
    </location>
</feature>
<feature type="glycosylation site" description="N-linked (GlcNAc...) asparagine" evidence="2">
    <location>
        <position position="162"/>
    </location>
</feature>
<feature type="glycosylation site" description="N-linked (GlcNAc...) asparagine" evidence="2">
    <location>
        <position position="169"/>
    </location>
</feature>
<feature type="glycosylation site" description="N-linked (GlcNAc...) asparagine" evidence="2">
    <location>
        <position position="174"/>
    </location>
</feature>
<feature type="glycosylation site" description="N-linked (GlcNAc...) asparagine" evidence="2">
    <location>
        <position position="195"/>
    </location>
</feature>
<feature type="glycosylation site" description="N-linked (GlcNAc...) asparagine" evidence="2">
    <location>
        <position position="211"/>
    </location>
</feature>
<feature type="mutagenesis site" description="In LecRK-IX.1-AA; loss of kinase activity and impaired ability to mediate resistance to Phytophthora." evidence="6">
    <original>RD</original>
    <variation>AA</variation>
    <location>
        <begin position="458"/>
        <end position="459"/>
    </location>
</feature>
<feature type="mutagenesis site" description="In LecRK-IX.1-RN; loss of kinase activity and impaired ability to mediate resistance to Phytophthora." evidence="6">
    <original>D</original>
    <variation>N</variation>
    <location>
        <position position="459"/>
    </location>
</feature>
<reference key="1">
    <citation type="journal article" date="2000" name="Nature">
        <title>Sequence and analysis of chromosome 5 of the plant Arabidopsis thaliana.</title>
        <authorList>
            <person name="Tabata S."/>
            <person name="Kaneko T."/>
            <person name="Nakamura Y."/>
            <person name="Kotani H."/>
            <person name="Kato T."/>
            <person name="Asamizu E."/>
            <person name="Miyajima N."/>
            <person name="Sasamoto S."/>
            <person name="Kimura T."/>
            <person name="Hosouchi T."/>
            <person name="Kawashima K."/>
            <person name="Kohara M."/>
            <person name="Matsumoto M."/>
            <person name="Matsuno A."/>
            <person name="Muraki A."/>
            <person name="Nakayama S."/>
            <person name="Nakazaki N."/>
            <person name="Naruo K."/>
            <person name="Okumura S."/>
            <person name="Shinpo S."/>
            <person name="Takeuchi C."/>
            <person name="Wada T."/>
            <person name="Watanabe A."/>
            <person name="Yamada M."/>
            <person name="Yasuda M."/>
            <person name="Sato S."/>
            <person name="de la Bastide M."/>
            <person name="Huang E."/>
            <person name="Spiegel L."/>
            <person name="Gnoj L."/>
            <person name="O'Shaughnessy A."/>
            <person name="Preston R."/>
            <person name="Habermann K."/>
            <person name="Murray J."/>
            <person name="Johnson D."/>
            <person name="Rohlfing T."/>
            <person name="Nelson J."/>
            <person name="Stoneking T."/>
            <person name="Pepin K."/>
            <person name="Spieth J."/>
            <person name="Sekhon M."/>
            <person name="Armstrong J."/>
            <person name="Becker M."/>
            <person name="Belter E."/>
            <person name="Cordum H."/>
            <person name="Cordes M."/>
            <person name="Courtney L."/>
            <person name="Courtney W."/>
            <person name="Dante M."/>
            <person name="Du H."/>
            <person name="Edwards J."/>
            <person name="Fryman J."/>
            <person name="Haakensen B."/>
            <person name="Lamar E."/>
            <person name="Latreille P."/>
            <person name="Leonard S."/>
            <person name="Meyer R."/>
            <person name="Mulvaney E."/>
            <person name="Ozersky P."/>
            <person name="Riley A."/>
            <person name="Strowmatt C."/>
            <person name="Wagner-McPherson C."/>
            <person name="Wollam A."/>
            <person name="Yoakum M."/>
            <person name="Bell M."/>
            <person name="Dedhia N."/>
            <person name="Parnell L."/>
            <person name="Shah R."/>
            <person name="Rodriguez M."/>
            <person name="Hoon See L."/>
            <person name="Vil D."/>
            <person name="Baker J."/>
            <person name="Kirchoff K."/>
            <person name="Toth K."/>
            <person name="King L."/>
            <person name="Bahret A."/>
            <person name="Miller B."/>
            <person name="Marra M.A."/>
            <person name="Martienssen R."/>
            <person name="McCombie W.R."/>
            <person name="Wilson R.K."/>
            <person name="Murphy G."/>
            <person name="Bancroft I."/>
            <person name="Volckaert G."/>
            <person name="Wambutt R."/>
            <person name="Duesterhoeft A."/>
            <person name="Stiekema W."/>
            <person name="Pohl T."/>
            <person name="Entian K.-D."/>
            <person name="Terryn N."/>
            <person name="Hartley N."/>
            <person name="Bent E."/>
            <person name="Johnson S."/>
            <person name="Langham S.-A."/>
            <person name="McCullagh B."/>
            <person name="Robben J."/>
            <person name="Grymonprez B."/>
            <person name="Zimmermann W."/>
            <person name="Ramsperger U."/>
            <person name="Wedler H."/>
            <person name="Balke K."/>
            <person name="Wedler E."/>
            <person name="Peters S."/>
            <person name="van Staveren M."/>
            <person name="Dirkse W."/>
            <person name="Mooijman P."/>
            <person name="Klein Lankhorst R."/>
            <person name="Weitzenegger T."/>
            <person name="Bothe G."/>
            <person name="Rose M."/>
            <person name="Hauf J."/>
            <person name="Berneiser S."/>
            <person name="Hempel S."/>
            <person name="Feldpausch M."/>
            <person name="Lamberth S."/>
            <person name="Villarroel R."/>
            <person name="Gielen J."/>
            <person name="Ardiles W."/>
            <person name="Bents O."/>
            <person name="Lemcke K."/>
            <person name="Kolesov G."/>
            <person name="Mayer K.F.X."/>
            <person name="Rudd S."/>
            <person name="Schoof H."/>
            <person name="Schueller C."/>
            <person name="Zaccaria P."/>
            <person name="Mewes H.-W."/>
            <person name="Bevan M."/>
            <person name="Fransz P.F."/>
        </authorList>
    </citation>
    <scope>NUCLEOTIDE SEQUENCE [LARGE SCALE GENOMIC DNA]</scope>
    <source>
        <strain>cv. Columbia</strain>
    </source>
</reference>
<reference key="2">
    <citation type="journal article" date="2017" name="Plant J.">
        <title>Araport11: a complete reannotation of the Arabidopsis thaliana reference genome.</title>
        <authorList>
            <person name="Cheng C.Y."/>
            <person name="Krishnakumar V."/>
            <person name="Chan A.P."/>
            <person name="Thibaud-Nissen F."/>
            <person name="Schobel S."/>
            <person name="Town C.D."/>
        </authorList>
    </citation>
    <scope>GENOME REANNOTATION</scope>
    <source>
        <strain>cv. Columbia</strain>
    </source>
</reference>
<reference key="3">
    <citation type="journal article" date="2006" name="Plant Biotechnol. J.">
        <title>Simultaneous high-throughput recombinational cloning of open reading frames in closed and open configurations.</title>
        <authorList>
            <person name="Underwood B.A."/>
            <person name="Vanderhaeghen R."/>
            <person name="Whitford R."/>
            <person name="Town C.D."/>
            <person name="Hilson P."/>
        </authorList>
    </citation>
    <scope>NUCLEOTIDE SEQUENCE [LARGE SCALE MRNA]</scope>
    <source>
        <strain>cv. Columbia</strain>
    </source>
</reference>
<reference key="4">
    <citation type="journal article" date="2002" name="Crit. Rev. Plant Sci.">
        <title>Lectin receptor kinases in plants.</title>
        <authorList>
            <person name="Barre A."/>
            <person name="Herve C."/>
            <person name="Lescure B."/>
            <person name="Rouge P."/>
        </authorList>
    </citation>
    <scope>GENE FAMILY</scope>
</reference>
<reference key="5">
    <citation type="journal article" date="2009" name="J. Exp. Bot.">
        <title>Arabidopsis L-type lectin receptor kinases: phylogeny, classification, and expression profiles.</title>
        <authorList>
            <person name="Bouwmeester K."/>
            <person name="Govers F."/>
        </authorList>
    </citation>
    <scope>GENE FAMILY</scope>
    <scope>NOMENCLATURE</scope>
</reference>
<reference key="6">
    <citation type="journal article" date="2014" name="Mol. Plant Microbe Interact.">
        <title>Phenotypic analyses of Arabidopsis T-DNA insertion lines and expression profiling reveal that multiple L-type lectin receptor kinases are involved in plant immunity.</title>
        <authorList>
            <person name="Wang Y."/>
            <person name="Bouwmeester K."/>
            <person name="Beseh P."/>
            <person name="Shan W."/>
            <person name="Govers F."/>
        </authorList>
    </citation>
    <scope>FUNCTION</scope>
    <scope>DISRUPTION PHENOTYPE</scope>
    <source>
        <strain>cv. Columbia</strain>
    </source>
</reference>
<reference key="7">
    <citation type="journal article" date="2015" name="Mol. Plant Microbe Interact.">
        <title>Arabidopsis lectin receptor kinases LecRK-IX.1 and LecRK-IX.2 are functional analogs in regulating phytophthora resistance and plant cell death.</title>
        <authorList>
            <person name="Wang Y."/>
            <person name="Cordewener J.H.G."/>
            <person name="America A.H.P."/>
            <person name="Shan W."/>
            <person name="Bouwmeester K."/>
            <person name="Govers F."/>
        </authorList>
    </citation>
    <scope>FUNCTION</scope>
    <scope>MUTAGENESIS OF 458-ARG-ASP-459 AND ASP-459</scope>
    <scope>DISRUPTION PHENOTYPE</scope>
    <scope>INTERACTION WITH ABCG40</scope>
    <scope>MISCELLANEOUS</scope>
    <source>
        <strain>cv. Columbia</strain>
    </source>
</reference>
<proteinExistence type="evidence at protein level"/>
<dbReference type="EC" id="2.7.11.1" evidence="3"/>
<dbReference type="EMBL" id="AL353995">
    <property type="protein sequence ID" value="CAB89390.1"/>
    <property type="molecule type" value="Genomic_DNA"/>
</dbReference>
<dbReference type="EMBL" id="CP002688">
    <property type="protein sequence ID" value="AED91560.1"/>
    <property type="molecule type" value="Genomic_DNA"/>
</dbReference>
<dbReference type="EMBL" id="DQ446940">
    <property type="protein sequence ID" value="ABE66151.1"/>
    <property type="molecule type" value="mRNA"/>
</dbReference>
<dbReference type="PIR" id="T49986">
    <property type="entry name" value="T49986"/>
</dbReference>
<dbReference type="RefSeq" id="NP_196615.1">
    <property type="nucleotide sequence ID" value="NM_121091.2"/>
</dbReference>
<dbReference type="SMR" id="Q9LXA5"/>
<dbReference type="BioGRID" id="16196">
    <property type="interactions" value="5"/>
</dbReference>
<dbReference type="FunCoup" id="Q9LXA5">
    <property type="interactions" value="136"/>
</dbReference>
<dbReference type="IntAct" id="Q9LXA5">
    <property type="interactions" value="5"/>
</dbReference>
<dbReference type="STRING" id="3702.Q9LXA5"/>
<dbReference type="GlyCosmos" id="Q9LXA5">
    <property type="glycosylation" value="8 sites, No reported glycans"/>
</dbReference>
<dbReference type="GlyGen" id="Q9LXA5">
    <property type="glycosylation" value="8 sites"/>
</dbReference>
<dbReference type="PaxDb" id="3702-AT5G10530.1"/>
<dbReference type="ProteomicsDB" id="238524"/>
<dbReference type="EnsemblPlants" id="AT5G10530.1">
    <property type="protein sequence ID" value="AT5G10530.1"/>
    <property type="gene ID" value="AT5G10530"/>
</dbReference>
<dbReference type="GeneID" id="830918"/>
<dbReference type="Gramene" id="AT5G10530.1">
    <property type="protein sequence ID" value="AT5G10530.1"/>
    <property type="gene ID" value="AT5G10530"/>
</dbReference>
<dbReference type="KEGG" id="ath:AT5G10530"/>
<dbReference type="Araport" id="AT5G10530"/>
<dbReference type="TAIR" id="AT5G10530">
    <property type="gene designation" value="LECRK-IX.1"/>
</dbReference>
<dbReference type="eggNOG" id="ENOG502QQSK">
    <property type="taxonomic scope" value="Eukaryota"/>
</dbReference>
<dbReference type="HOGENOM" id="CLU_000288_62_6_1"/>
<dbReference type="InParanoid" id="Q9LXA5"/>
<dbReference type="OMA" id="VWIAYNA"/>
<dbReference type="PhylomeDB" id="Q9LXA5"/>
<dbReference type="PRO" id="PR:Q9LXA5"/>
<dbReference type="Proteomes" id="UP000006548">
    <property type="component" value="Chromosome 5"/>
</dbReference>
<dbReference type="ExpressionAtlas" id="Q9LXA5">
    <property type="expression patterns" value="baseline and differential"/>
</dbReference>
<dbReference type="GO" id="GO:0005886">
    <property type="term" value="C:plasma membrane"/>
    <property type="evidence" value="ECO:0000250"/>
    <property type="project" value="UniProtKB"/>
</dbReference>
<dbReference type="GO" id="GO:0005524">
    <property type="term" value="F:ATP binding"/>
    <property type="evidence" value="ECO:0007669"/>
    <property type="project" value="UniProtKB-KW"/>
</dbReference>
<dbReference type="GO" id="GO:0030246">
    <property type="term" value="F:carbohydrate binding"/>
    <property type="evidence" value="ECO:0007669"/>
    <property type="project" value="UniProtKB-KW"/>
</dbReference>
<dbReference type="GO" id="GO:0106310">
    <property type="term" value="F:protein serine kinase activity"/>
    <property type="evidence" value="ECO:0007669"/>
    <property type="project" value="RHEA"/>
</dbReference>
<dbReference type="GO" id="GO:0004674">
    <property type="term" value="F:protein serine/threonine kinase activity"/>
    <property type="evidence" value="ECO:0007669"/>
    <property type="project" value="UniProtKB-KW"/>
</dbReference>
<dbReference type="GO" id="GO:0002229">
    <property type="term" value="P:defense response to oomycetes"/>
    <property type="evidence" value="ECO:0000315"/>
    <property type="project" value="UniProtKB"/>
</dbReference>
<dbReference type="GO" id="GO:0009626">
    <property type="term" value="P:plant-type hypersensitive response"/>
    <property type="evidence" value="ECO:0000315"/>
    <property type="project" value="UniProtKB"/>
</dbReference>
<dbReference type="CDD" id="cd06899">
    <property type="entry name" value="lectin_legume_LecRK_Arcelin_ConA"/>
    <property type="match status" value="1"/>
</dbReference>
<dbReference type="CDD" id="cd14066">
    <property type="entry name" value="STKc_IRAK"/>
    <property type="match status" value="1"/>
</dbReference>
<dbReference type="FunFam" id="2.60.120.200:FF:000103">
    <property type="entry name" value="L-type lectin-domain containing receptor kinase IX.1"/>
    <property type="match status" value="1"/>
</dbReference>
<dbReference type="FunFam" id="3.30.200.20:FF:000168">
    <property type="entry name" value="L-type lectin-domain containing receptor kinase IX.1"/>
    <property type="match status" value="1"/>
</dbReference>
<dbReference type="FunFam" id="1.10.510.10:FF:000240">
    <property type="entry name" value="Lectin-domain containing receptor kinase A4.3"/>
    <property type="match status" value="1"/>
</dbReference>
<dbReference type="Gene3D" id="2.60.120.200">
    <property type="match status" value="1"/>
</dbReference>
<dbReference type="Gene3D" id="3.30.200.20">
    <property type="entry name" value="Phosphorylase Kinase, domain 1"/>
    <property type="match status" value="1"/>
</dbReference>
<dbReference type="Gene3D" id="1.10.510.10">
    <property type="entry name" value="Transferase(Phosphotransferase) domain 1"/>
    <property type="match status" value="1"/>
</dbReference>
<dbReference type="InterPro" id="IPR013320">
    <property type="entry name" value="ConA-like_dom_sf"/>
</dbReference>
<dbReference type="InterPro" id="IPR011009">
    <property type="entry name" value="Kinase-like_dom_sf"/>
</dbReference>
<dbReference type="InterPro" id="IPR050528">
    <property type="entry name" value="L-type_Lectin-RKs"/>
</dbReference>
<dbReference type="InterPro" id="IPR001220">
    <property type="entry name" value="Legume_lectin_dom"/>
</dbReference>
<dbReference type="InterPro" id="IPR000719">
    <property type="entry name" value="Prot_kinase_dom"/>
</dbReference>
<dbReference type="InterPro" id="IPR017441">
    <property type="entry name" value="Protein_kinase_ATP_BS"/>
</dbReference>
<dbReference type="InterPro" id="IPR008271">
    <property type="entry name" value="Ser/Thr_kinase_AS"/>
</dbReference>
<dbReference type="PANTHER" id="PTHR27007">
    <property type="match status" value="1"/>
</dbReference>
<dbReference type="Pfam" id="PF00139">
    <property type="entry name" value="Lectin_legB"/>
    <property type="match status" value="1"/>
</dbReference>
<dbReference type="Pfam" id="PF00069">
    <property type="entry name" value="Pkinase"/>
    <property type="match status" value="1"/>
</dbReference>
<dbReference type="SMART" id="SM00220">
    <property type="entry name" value="S_TKc"/>
    <property type="match status" value="1"/>
</dbReference>
<dbReference type="SUPFAM" id="SSF49899">
    <property type="entry name" value="Concanavalin A-like lectins/glucanases"/>
    <property type="match status" value="1"/>
</dbReference>
<dbReference type="SUPFAM" id="SSF56112">
    <property type="entry name" value="Protein kinase-like (PK-like)"/>
    <property type="match status" value="1"/>
</dbReference>
<dbReference type="PROSITE" id="PS00107">
    <property type="entry name" value="PROTEIN_KINASE_ATP"/>
    <property type="match status" value="1"/>
</dbReference>
<dbReference type="PROSITE" id="PS50011">
    <property type="entry name" value="PROTEIN_KINASE_DOM"/>
    <property type="match status" value="1"/>
</dbReference>
<dbReference type="PROSITE" id="PS00108">
    <property type="entry name" value="PROTEIN_KINASE_ST"/>
    <property type="match status" value="1"/>
</dbReference>
<keyword id="KW-0067">ATP-binding</keyword>
<keyword id="KW-1003">Cell membrane</keyword>
<keyword id="KW-0325">Glycoprotein</keyword>
<keyword id="KW-0418">Kinase</keyword>
<keyword id="KW-0430">Lectin</keyword>
<keyword id="KW-0472">Membrane</keyword>
<keyword id="KW-0547">Nucleotide-binding</keyword>
<keyword id="KW-0611">Plant defense</keyword>
<keyword id="KW-0675">Receptor</keyword>
<keyword id="KW-1185">Reference proteome</keyword>
<keyword id="KW-0723">Serine/threonine-protein kinase</keyword>
<keyword id="KW-0732">Signal</keyword>
<keyword id="KW-0808">Transferase</keyword>
<keyword id="KW-0812">Transmembrane</keyword>
<keyword id="KW-1133">Transmembrane helix</keyword>
<comment type="function">
    <text evidence="6">Promotes hydrogen peroxide H(2)O(2) production and cell death.</text>
</comment>
<comment type="function">
    <text evidence="5 6">Involved in resistance response to the pathogenic oomycetes Phytophthora infestans and Phytophthora capsici.</text>
</comment>
<comment type="catalytic activity">
    <reaction evidence="3">
        <text>L-seryl-[protein] + ATP = O-phospho-L-seryl-[protein] + ADP + H(+)</text>
        <dbReference type="Rhea" id="RHEA:17989"/>
        <dbReference type="Rhea" id="RHEA-COMP:9863"/>
        <dbReference type="Rhea" id="RHEA-COMP:11604"/>
        <dbReference type="ChEBI" id="CHEBI:15378"/>
        <dbReference type="ChEBI" id="CHEBI:29999"/>
        <dbReference type="ChEBI" id="CHEBI:30616"/>
        <dbReference type="ChEBI" id="CHEBI:83421"/>
        <dbReference type="ChEBI" id="CHEBI:456216"/>
        <dbReference type="EC" id="2.7.11.1"/>
    </reaction>
</comment>
<comment type="catalytic activity">
    <reaction evidence="3">
        <text>L-threonyl-[protein] + ATP = O-phospho-L-threonyl-[protein] + ADP + H(+)</text>
        <dbReference type="Rhea" id="RHEA:46608"/>
        <dbReference type="Rhea" id="RHEA-COMP:11060"/>
        <dbReference type="Rhea" id="RHEA-COMP:11605"/>
        <dbReference type="ChEBI" id="CHEBI:15378"/>
        <dbReference type="ChEBI" id="CHEBI:30013"/>
        <dbReference type="ChEBI" id="CHEBI:30616"/>
        <dbReference type="ChEBI" id="CHEBI:61977"/>
        <dbReference type="ChEBI" id="CHEBI:456216"/>
        <dbReference type="EC" id="2.7.11.1"/>
    </reaction>
</comment>
<comment type="subunit">
    <text evidence="6">Interacts with ABCG40.</text>
</comment>
<comment type="subcellular location">
    <subcellularLocation>
        <location evidence="1">Cell membrane</location>
        <topology evidence="2">Single-pass type I membrane protein</topology>
    </subcellularLocation>
</comment>
<comment type="disruption phenotype">
    <text evidence="5 6">Increased susceptibility to the oomycetes Phytophthora brassicae and Phytophthora capsici associated with reduced expression of some defense genes (e.g. PR1, PDF1.2, CYP71B15 and CYP81F2). However, normal defense responses to the fungal pathogen Alternaria brassicicola and to the bacterial pathogen Pseudomonas syringae (PubMed:25083911, PubMed:26011556). Susceptibility to P.brassicae and P.capsici is enhanced in plants impaired in LECRK91 and LECRK92 (PubMed:26011556).</text>
</comment>
<comment type="miscellaneous">
    <text evidence="6">Both lectin domain and kinase activity are required for resistance to oomycetes, but only the lectin domain is required to trigger cell death.</text>
</comment>
<comment type="similarity">
    <text evidence="8">In the C-terminal section; belongs to the protein kinase superfamily. Ser/Thr protein kinase family.</text>
</comment>
<comment type="similarity">
    <text evidence="8">In the N-terminal section; belongs to the leguminous lectin family.</text>
</comment>
<protein>
    <recommendedName>
        <fullName evidence="7">L-type lectin-domain containing receptor kinase IX.1</fullName>
        <shortName evidence="7">LecRK-IX.1</shortName>
        <ecNumber evidence="3">2.7.11.1</ecNumber>
    </recommendedName>
</protein>
<gene>
    <name evidence="7" type="primary">LECRK91</name>
    <name evidence="9" type="ordered locus">At5g10530</name>
    <name evidence="10" type="ORF">F12B17.120</name>
</gene>
<accession>Q9LXA5</accession>
<name>LRK91_ARATH</name>
<sequence length="651" mass="72005">MANSILLFSFVLVLPFVCSVQFNISRFGSDVSEIAYQGDARANGAVELTNIDYTCRAGWATYGKQVPLWNPGTSKPSDFSTRFSFRIDTRNVGYGNYGHGFAFFLAPARIQLPPNSAGGFLGLFNGTNNQSSAFPLVYVEFDTFTNPEWDPLDVKSHVGINNNSLVSSNYTSWNATSHNQDIGRVLIFYDSARRNLSVSWTYDLTSDPLENSSLSYIIDLSKVLPSEVTIGFSATSGGVTEGNRLLSWEFSSSLELIDIKKSQNDKKGMIIGISVSGFVLLTFFITSLIVFLKRKQQKKKAEETENLTSINEDLERGAGPRKFTYKDLASAANNFADDRKLGEGGFGAVYRGYLNSLDMMVAIKKFAGGSKQGKREFVTEVKIISSLRHRNLVQLIGWCHEKDEFLMIYEFMPNGSLDAHLFGKKPHLAWHVRCKITLGLASALLYLHEEWEQCVVHRDIKASNVMLDSNFNAKLGDFGLARLMDHELGPQTTGLAGTFGYMAPEYISTGRASKESDVYSFGVVTLEIVTGRKSVDRRQGRVEPVTNLVEKMWDLYGKGEVITAIDEKLRIGGFDEKQAECLMIVGLWCAHPDVNTRPSIKQAIQVLNLEAPVPHLPTKMPVATYHVSSSNTTSVSSGGATVTFSSAQHGR</sequence>
<evidence type="ECO:0000250" key="1">
    <source>
        <dbReference type="UniProtKB" id="Q9LSR8"/>
    </source>
</evidence>
<evidence type="ECO:0000255" key="2"/>
<evidence type="ECO:0000255" key="3">
    <source>
        <dbReference type="PROSITE-ProRule" id="PRU00159"/>
    </source>
</evidence>
<evidence type="ECO:0000256" key="4">
    <source>
        <dbReference type="SAM" id="MobiDB-lite"/>
    </source>
</evidence>
<evidence type="ECO:0000269" key="5">
    <source>
    </source>
</evidence>
<evidence type="ECO:0000269" key="6">
    <source>
    </source>
</evidence>
<evidence type="ECO:0000303" key="7">
    <source>
    </source>
</evidence>
<evidence type="ECO:0000305" key="8"/>
<evidence type="ECO:0000312" key="9">
    <source>
        <dbReference type="Araport" id="AT5G10530"/>
    </source>
</evidence>
<evidence type="ECO:0000312" key="10">
    <source>
        <dbReference type="EMBL" id="CAB89390.1"/>
    </source>
</evidence>
<organism>
    <name type="scientific">Arabidopsis thaliana</name>
    <name type="common">Mouse-ear cress</name>
    <dbReference type="NCBI Taxonomy" id="3702"/>
    <lineage>
        <taxon>Eukaryota</taxon>
        <taxon>Viridiplantae</taxon>
        <taxon>Streptophyta</taxon>
        <taxon>Embryophyta</taxon>
        <taxon>Tracheophyta</taxon>
        <taxon>Spermatophyta</taxon>
        <taxon>Magnoliopsida</taxon>
        <taxon>eudicotyledons</taxon>
        <taxon>Gunneridae</taxon>
        <taxon>Pentapetalae</taxon>
        <taxon>rosids</taxon>
        <taxon>malvids</taxon>
        <taxon>Brassicales</taxon>
        <taxon>Brassicaceae</taxon>
        <taxon>Camelineae</taxon>
        <taxon>Arabidopsis</taxon>
    </lineage>
</organism>